<dbReference type="EC" id="2.7.-.-"/>
<dbReference type="EMBL" id="X03497">
    <property type="protein sequence ID" value="CAA27217.1"/>
    <property type="molecule type" value="Genomic_DNA"/>
</dbReference>
<dbReference type="EMBL" id="M11081">
    <property type="protein sequence ID" value="AAA22787.1"/>
    <property type="molecule type" value="Genomic_DNA"/>
</dbReference>
<dbReference type="EMBL" id="M22039">
    <property type="protein sequence ID" value="AAA16802.1"/>
    <property type="molecule type" value="Unassigned_DNA"/>
</dbReference>
<dbReference type="EMBL" id="Z49782">
    <property type="protein sequence ID" value="CAA89872.1"/>
    <property type="molecule type" value="Genomic_DNA"/>
</dbReference>
<dbReference type="EMBL" id="AL009126">
    <property type="protein sequence ID" value="CAB15730.1"/>
    <property type="molecule type" value="Genomic_DNA"/>
</dbReference>
<dbReference type="PIR" id="A24737">
    <property type="entry name" value="SZBS0F"/>
</dbReference>
<dbReference type="RefSeq" id="NP_391594.1">
    <property type="nucleotide sequence ID" value="NC_000964.3"/>
</dbReference>
<dbReference type="RefSeq" id="WP_003227621.1">
    <property type="nucleotide sequence ID" value="NZ_OZ025638.1"/>
</dbReference>
<dbReference type="PDB" id="1F51">
    <property type="method" value="X-ray"/>
    <property type="resolution" value="3.00 A"/>
    <property type="chains" value="E/F/G/H=3-121"/>
</dbReference>
<dbReference type="PDB" id="1FSP">
    <property type="method" value="NMR"/>
    <property type="chains" value="A=1-124"/>
</dbReference>
<dbReference type="PDB" id="1NAT">
    <property type="method" value="X-ray"/>
    <property type="resolution" value="2.45 A"/>
    <property type="chains" value="A=1-124"/>
</dbReference>
<dbReference type="PDB" id="1PEY">
    <property type="method" value="X-ray"/>
    <property type="resolution" value="2.25 A"/>
    <property type="chains" value="A/B/C=1-124"/>
</dbReference>
<dbReference type="PDB" id="1PUX">
    <property type="method" value="NMR"/>
    <property type="chains" value="A=1-124"/>
</dbReference>
<dbReference type="PDB" id="1SRR">
    <property type="method" value="X-ray"/>
    <property type="resolution" value="1.90 A"/>
    <property type="chains" value="A/B/C=1-124"/>
</dbReference>
<dbReference type="PDB" id="2FSP">
    <property type="method" value="NMR"/>
    <property type="chains" value="A=1-124"/>
</dbReference>
<dbReference type="PDB" id="2FTK">
    <property type="method" value="X-ray"/>
    <property type="resolution" value="3.05 A"/>
    <property type="chains" value="E/F/G/H=1-124"/>
</dbReference>
<dbReference type="PDB" id="2JVI">
    <property type="method" value="NMR"/>
    <property type="chains" value="A=1-124"/>
</dbReference>
<dbReference type="PDB" id="2JVJ">
    <property type="method" value="NMR"/>
    <property type="chains" value="A=1-124"/>
</dbReference>
<dbReference type="PDB" id="2JVK">
    <property type="method" value="NMR"/>
    <property type="chains" value="A=1-124"/>
</dbReference>
<dbReference type="PDB" id="3Q15">
    <property type="method" value="X-ray"/>
    <property type="resolution" value="2.19 A"/>
    <property type="chains" value="C/D=1-124"/>
</dbReference>
<dbReference type="PDBsum" id="1F51"/>
<dbReference type="PDBsum" id="1FSP"/>
<dbReference type="PDBsum" id="1NAT"/>
<dbReference type="PDBsum" id="1PEY"/>
<dbReference type="PDBsum" id="1PUX"/>
<dbReference type="PDBsum" id="1SRR"/>
<dbReference type="PDBsum" id="2FSP"/>
<dbReference type="PDBsum" id="2FTK"/>
<dbReference type="PDBsum" id="2JVI"/>
<dbReference type="PDBsum" id="2JVJ"/>
<dbReference type="PDBsum" id="2JVK"/>
<dbReference type="PDBsum" id="3Q15"/>
<dbReference type="BMRB" id="P06628"/>
<dbReference type="SMR" id="P06628"/>
<dbReference type="DIP" id="DIP-58965N"/>
<dbReference type="FunCoup" id="P06628">
    <property type="interactions" value="225"/>
</dbReference>
<dbReference type="IntAct" id="P06628">
    <property type="interactions" value="6"/>
</dbReference>
<dbReference type="STRING" id="224308.BSU37130"/>
<dbReference type="BindingDB" id="P06628"/>
<dbReference type="ChEMBL" id="CHEMBL2111331"/>
<dbReference type="PaxDb" id="224308-BSU37130"/>
<dbReference type="EnsemblBacteria" id="CAB15730">
    <property type="protein sequence ID" value="CAB15730"/>
    <property type="gene ID" value="BSU_37130"/>
</dbReference>
<dbReference type="GeneID" id="86871667"/>
<dbReference type="GeneID" id="937041"/>
<dbReference type="KEGG" id="bsu:BSU37130"/>
<dbReference type="PATRIC" id="fig|224308.43.peg.3893"/>
<dbReference type="eggNOG" id="COG2204">
    <property type="taxonomic scope" value="Bacteria"/>
</dbReference>
<dbReference type="InParanoid" id="P06628"/>
<dbReference type="OrthoDB" id="9808843at2"/>
<dbReference type="PhylomeDB" id="P06628"/>
<dbReference type="BioCyc" id="BSUB:BSU37130-MONOMER"/>
<dbReference type="EvolutionaryTrace" id="P06628"/>
<dbReference type="PRO" id="PR:P06628"/>
<dbReference type="Proteomes" id="UP000001570">
    <property type="component" value="Chromosome"/>
</dbReference>
<dbReference type="GO" id="GO:0005737">
    <property type="term" value="C:cytoplasm"/>
    <property type="evidence" value="ECO:0007669"/>
    <property type="project" value="UniProtKB-SubCell"/>
</dbReference>
<dbReference type="GO" id="GO:0016301">
    <property type="term" value="F:kinase activity"/>
    <property type="evidence" value="ECO:0007669"/>
    <property type="project" value="UniProtKB-KW"/>
</dbReference>
<dbReference type="GO" id="GO:0046872">
    <property type="term" value="F:metal ion binding"/>
    <property type="evidence" value="ECO:0007669"/>
    <property type="project" value="UniProtKB-KW"/>
</dbReference>
<dbReference type="GO" id="GO:0000160">
    <property type="term" value="P:phosphorelay signal transduction system"/>
    <property type="evidence" value="ECO:0007669"/>
    <property type="project" value="UniProtKB-KW"/>
</dbReference>
<dbReference type="GO" id="GO:0030435">
    <property type="term" value="P:sporulation resulting in formation of a cellular spore"/>
    <property type="evidence" value="ECO:0007669"/>
    <property type="project" value="UniProtKB-KW"/>
</dbReference>
<dbReference type="CDD" id="cd17553">
    <property type="entry name" value="REC_Spo0F-like"/>
    <property type="match status" value="1"/>
</dbReference>
<dbReference type="Gene3D" id="3.40.50.2300">
    <property type="match status" value="1"/>
</dbReference>
<dbReference type="InterPro" id="IPR050595">
    <property type="entry name" value="Bact_response_regulator"/>
</dbReference>
<dbReference type="InterPro" id="IPR011006">
    <property type="entry name" value="CheY-like_superfamily"/>
</dbReference>
<dbReference type="InterPro" id="IPR001789">
    <property type="entry name" value="Sig_transdc_resp-reg_receiver"/>
</dbReference>
<dbReference type="PANTHER" id="PTHR44591:SF3">
    <property type="entry name" value="RESPONSE REGULATORY DOMAIN-CONTAINING PROTEIN"/>
    <property type="match status" value="1"/>
</dbReference>
<dbReference type="PANTHER" id="PTHR44591">
    <property type="entry name" value="STRESS RESPONSE REGULATOR PROTEIN 1"/>
    <property type="match status" value="1"/>
</dbReference>
<dbReference type="Pfam" id="PF00072">
    <property type="entry name" value="Response_reg"/>
    <property type="match status" value="1"/>
</dbReference>
<dbReference type="SMART" id="SM00448">
    <property type="entry name" value="REC"/>
    <property type="match status" value="1"/>
</dbReference>
<dbReference type="SUPFAM" id="SSF52172">
    <property type="entry name" value="CheY-like"/>
    <property type="match status" value="1"/>
</dbReference>
<dbReference type="PROSITE" id="PS50110">
    <property type="entry name" value="RESPONSE_REGULATORY"/>
    <property type="match status" value="1"/>
</dbReference>
<sequence length="124" mass="14228">MMNEKILIVDDQYGIRILLNEVFNKEGYQTFQAANGLQALDIVTKERPDLVLLDMKIPGMDGIEILKRMKVIDENIRVIIMTAYGELDMIQESKELGALTHFAKPFDIDEIRDAVKKYLPLKSN</sequence>
<comment type="function">
    <text>Key element in the phosphorelay regulating sporulation initiation. Phosphorylation of spo0B during sporulation initiation.</text>
</comment>
<comment type="cofactor">
    <cofactor>
        <name>Mg(2+)</name>
        <dbReference type="ChEBI" id="CHEBI:18420"/>
    </cofactor>
    <text>Binds 1 Mg(2+) ion per subunit.</text>
</comment>
<comment type="interaction">
    <interactant intactId="EBI-6418009">
        <id>P06628</id>
    </interactant>
    <interactant intactId="EBI-6405707">
        <id>P16497</id>
        <label>kinA</label>
    </interactant>
    <organismsDiffer>false</organismsDiffer>
    <experiments>3</experiments>
</comment>
<comment type="interaction">
    <interactant intactId="EBI-6418009">
        <id>P06628</id>
    </interactant>
    <interactant intactId="EBI-15913371">
        <id>Q59HN8</id>
        <label>rapH</label>
    </interactant>
    <organismsDiffer>false</organismsDiffer>
    <experiments>2</experiments>
</comment>
<comment type="interaction">
    <interactant intactId="EBI-6418009">
        <id>P06628</id>
    </interactant>
    <interactant intactId="EBI-5246213">
        <id>O34327</id>
        <label>rapJ</label>
    </interactant>
    <organismsDiffer>false</organismsDiffer>
    <experiments>2</experiments>
</comment>
<comment type="subcellular location">
    <subcellularLocation>
        <location evidence="3">Cytoplasm</location>
    </subcellularLocation>
</comment>
<comment type="PTM">
    <text evidence="2">Phosphorylated by KinA and KinB. Dephosphorylated by RapA and RapB.</text>
</comment>
<organism>
    <name type="scientific">Bacillus subtilis (strain 168)</name>
    <dbReference type="NCBI Taxonomy" id="224308"/>
    <lineage>
        <taxon>Bacteria</taxon>
        <taxon>Bacillati</taxon>
        <taxon>Bacillota</taxon>
        <taxon>Bacilli</taxon>
        <taxon>Bacillales</taxon>
        <taxon>Bacillaceae</taxon>
        <taxon>Bacillus</taxon>
    </lineage>
</organism>
<keyword id="KW-0002">3D-structure</keyword>
<keyword id="KW-0963">Cytoplasm</keyword>
<keyword id="KW-0418">Kinase</keyword>
<keyword id="KW-0460">Magnesium</keyword>
<keyword id="KW-0479">Metal-binding</keyword>
<keyword id="KW-0597">Phosphoprotein</keyword>
<keyword id="KW-1185">Reference proteome</keyword>
<keyword id="KW-0749">Sporulation</keyword>
<keyword id="KW-0808">Transferase</keyword>
<keyword id="KW-0902">Two-component regulatory system</keyword>
<reference key="1">
    <citation type="journal article" date="1986" name="Nucleic Acids Res.">
        <title>Revised assignment for the Bacillus subtilis spo0F gene and its homology with spo0A and with two Escherichia coli genes.</title>
        <authorList>
            <person name="Yoshikawa H."/>
            <person name="Kazami J."/>
            <person name="Yamashita S."/>
            <person name="Chibazakura T."/>
            <person name="Sone H."/>
            <person name="Kawamura F."/>
            <person name="Oda M."/>
            <person name="Isaka M."/>
            <person name="Kobayashi Y."/>
            <person name="Saito H."/>
        </authorList>
    </citation>
    <scope>NUCLEOTIDE SEQUENCE [GENOMIC DNA]</scope>
</reference>
<reference key="2">
    <citation type="journal article" date="1985" name="Proc. Natl. Acad. Sci. U.S.A.">
        <title>Deduced product of the stage 0 sporulation gene spo0F shares homology with the Spo0A, OmpR, and SfrA proteins.</title>
        <authorList>
            <person name="Trach K.A."/>
            <person name="Chapman J.W."/>
            <person name="Piggot P.J."/>
            <person name="Hoch J.A."/>
        </authorList>
    </citation>
    <scope>NUCLEOTIDE SEQUENCE [GENOMIC DNA]</scope>
    <source>
        <strain>168 / JH642</strain>
    </source>
</reference>
<reference key="3">
    <citation type="journal article" date="1988" name="J. Bacteriol.">
        <title>Complete sequence and transcriptional analysis of the spo0F region of the Bacillus subtilis chromosome.</title>
        <authorList>
            <person name="Trach K."/>
            <person name="Chapman J.W."/>
            <person name="Piggot P.J."/>
            <person name="Lecoq D."/>
            <person name="Hoch J.A."/>
        </authorList>
    </citation>
    <scope>NUCLEOTIDE SEQUENCE [GENOMIC DNA]</scope>
    <source>
        <strain>168 / JH642</strain>
    </source>
</reference>
<reference key="4">
    <citation type="journal article" date="1997" name="Microbiology">
        <title>The Bacillus subtilis genome from gerBC (311 degrees) to licR (334 degrees).</title>
        <authorList>
            <person name="Presecan E."/>
            <person name="Moszer I."/>
            <person name="Boursier L."/>
            <person name="Cruz Ramos H."/>
            <person name="De La Fuente V."/>
            <person name="Hullo M.-F."/>
            <person name="Lelong C."/>
            <person name="Schleich S."/>
            <person name="Sekowska A."/>
            <person name="Song B.H."/>
            <person name="Villani G."/>
            <person name="Kunst F."/>
            <person name="Danchin A."/>
            <person name="Glaser P."/>
        </authorList>
    </citation>
    <scope>NUCLEOTIDE SEQUENCE [GENOMIC DNA]</scope>
    <source>
        <strain>168</strain>
    </source>
</reference>
<reference key="5">
    <citation type="journal article" date="1997" name="Nature">
        <title>The complete genome sequence of the Gram-positive bacterium Bacillus subtilis.</title>
        <authorList>
            <person name="Kunst F."/>
            <person name="Ogasawara N."/>
            <person name="Moszer I."/>
            <person name="Albertini A.M."/>
            <person name="Alloni G."/>
            <person name="Azevedo V."/>
            <person name="Bertero M.G."/>
            <person name="Bessieres P."/>
            <person name="Bolotin A."/>
            <person name="Borchert S."/>
            <person name="Borriss R."/>
            <person name="Boursier L."/>
            <person name="Brans A."/>
            <person name="Braun M."/>
            <person name="Brignell S.C."/>
            <person name="Bron S."/>
            <person name="Brouillet S."/>
            <person name="Bruschi C.V."/>
            <person name="Caldwell B."/>
            <person name="Capuano V."/>
            <person name="Carter N.M."/>
            <person name="Choi S.-K."/>
            <person name="Codani J.-J."/>
            <person name="Connerton I.F."/>
            <person name="Cummings N.J."/>
            <person name="Daniel R.A."/>
            <person name="Denizot F."/>
            <person name="Devine K.M."/>
            <person name="Duesterhoeft A."/>
            <person name="Ehrlich S.D."/>
            <person name="Emmerson P.T."/>
            <person name="Entian K.-D."/>
            <person name="Errington J."/>
            <person name="Fabret C."/>
            <person name="Ferrari E."/>
            <person name="Foulger D."/>
            <person name="Fritz C."/>
            <person name="Fujita M."/>
            <person name="Fujita Y."/>
            <person name="Fuma S."/>
            <person name="Galizzi A."/>
            <person name="Galleron N."/>
            <person name="Ghim S.-Y."/>
            <person name="Glaser P."/>
            <person name="Goffeau A."/>
            <person name="Golightly E.J."/>
            <person name="Grandi G."/>
            <person name="Guiseppi G."/>
            <person name="Guy B.J."/>
            <person name="Haga K."/>
            <person name="Haiech J."/>
            <person name="Harwood C.R."/>
            <person name="Henaut A."/>
            <person name="Hilbert H."/>
            <person name="Holsappel S."/>
            <person name="Hosono S."/>
            <person name="Hullo M.-F."/>
            <person name="Itaya M."/>
            <person name="Jones L.-M."/>
            <person name="Joris B."/>
            <person name="Karamata D."/>
            <person name="Kasahara Y."/>
            <person name="Klaerr-Blanchard M."/>
            <person name="Klein C."/>
            <person name="Kobayashi Y."/>
            <person name="Koetter P."/>
            <person name="Koningstein G."/>
            <person name="Krogh S."/>
            <person name="Kumano M."/>
            <person name="Kurita K."/>
            <person name="Lapidus A."/>
            <person name="Lardinois S."/>
            <person name="Lauber J."/>
            <person name="Lazarevic V."/>
            <person name="Lee S.-M."/>
            <person name="Levine A."/>
            <person name="Liu H."/>
            <person name="Masuda S."/>
            <person name="Mauel C."/>
            <person name="Medigue C."/>
            <person name="Medina N."/>
            <person name="Mellado R.P."/>
            <person name="Mizuno M."/>
            <person name="Moestl D."/>
            <person name="Nakai S."/>
            <person name="Noback M."/>
            <person name="Noone D."/>
            <person name="O'Reilly M."/>
            <person name="Ogawa K."/>
            <person name="Ogiwara A."/>
            <person name="Oudega B."/>
            <person name="Park S.-H."/>
            <person name="Parro V."/>
            <person name="Pohl T.M."/>
            <person name="Portetelle D."/>
            <person name="Porwollik S."/>
            <person name="Prescott A.M."/>
            <person name="Presecan E."/>
            <person name="Pujic P."/>
            <person name="Purnelle B."/>
            <person name="Rapoport G."/>
            <person name="Rey M."/>
            <person name="Reynolds S."/>
            <person name="Rieger M."/>
            <person name="Rivolta C."/>
            <person name="Rocha E."/>
            <person name="Roche B."/>
            <person name="Rose M."/>
            <person name="Sadaie Y."/>
            <person name="Sato T."/>
            <person name="Scanlan E."/>
            <person name="Schleich S."/>
            <person name="Schroeter R."/>
            <person name="Scoffone F."/>
            <person name="Sekiguchi J."/>
            <person name="Sekowska A."/>
            <person name="Seror S.J."/>
            <person name="Serror P."/>
            <person name="Shin B.-S."/>
            <person name="Soldo B."/>
            <person name="Sorokin A."/>
            <person name="Tacconi E."/>
            <person name="Takagi T."/>
            <person name="Takahashi H."/>
            <person name="Takemaru K."/>
            <person name="Takeuchi M."/>
            <person name="Tamakoshi A."/>
            <person name="Tanaka T."/>
            <person name="Terpstra P."/>
            <person name="Tognoni A."/>
            <person name="Tosato V."/>
            <person name="Uchiyama S."/>
            <person name="Vandenbol M."/>
            <person name="Vannier F."/>
            <person name="Vassarotti A."/>
            <person name="Viari A."/>
            <person name="Wambutt R."/>
            <person name="Wedler E."/>
            <person name="Wedler H."/>
            <person name="Weitzenegger T."/>
            <person name="Winters P."/>
            <person name="Wipat A."/>
            <person name="Yamamoto H."/>
            <person name="Yamane K."/>
            <person name="Yasumoto K."/>
            <person name="Yata K."/>
            <person name="Yoshida K."/>
            <person name="Yoshikawa H.-F."/>
            <person name="Zumstein E."/>
            <person name="Yoshikawa H."/>
            <person name="Danchin A."/>
        </authorList>
    </citation>
    <scope>NUCLEOTIDE SEQUENCE [LARGE SCALE GENOMIC DNA]</scope>
    <source>
        <strain>168</strain>
    </source>
</reference>
<reference key="6">
    <citation type="journal article" date="1995" name="Protein Sci.">
        <title>1H, 15N, and 13C backbone chemical shift assignments, secondary structure, and magnesium-binding characteristics of the Bacillus subtilis response regulator, Spo0F, determined by heteronuclear high-resolution NMR.</title>
        <authorList>
            <person name="Feher V.A."/>
            <person name="Zapf J.W."/>
            <person name="Hoch J.A."/>
            <person name="Dahlquist F.W."/>
            <person name="Whiteley J.M."/>
            <person name="Cavanagh J."/>
        </authorList>
    </citation>
    <scope>STRUCTURE BY NMR</scope>
</reference>
<reference key="7">
    <citation type="journal article" date="1997" name="Biochemistry">
        <title>High-resolution NMR structure and backbone dynamics of the Bacillus subtilis response regulator, Spo0F: implications for phosphorylation and molecular recognition.</title>
        <authorList>
            <person name="Feher V.A."/>
            <person name="Zapf J.W."/>
            <person name="Hoch J.A."/>
            <person name="Whiteley J.M."/>
            <person name="McIntosh L.P."/>
            <person name="Rance M."/>
            <person name="Skelton N.J."/>
            <person name="Dahlquist F.W."/>
            <person name="Cavanagh J."/>
        </authorList>
    </citation>
    <scope>STRUCTURE BY NMR</scope>
    <scope>PHOSPHORYLATION AT ASP-54</scope>
</reference>
<reference key="8">
    <citation type="journal article" date="1996" name="Structure">
        <title>Crystal structure of a phosphatase-resistant mutant of sporulation response regulator Spo0F from Bacillus subtilis.</title>
        <authorList>
            <person name="Madhusudan X."/>
            <person name="Zapf J."/>
            <person name="Whiteley J.M."/>
            <person name="Hoch J.A."/>
            <person name="Xuong N.H."/>
            <person name="Varughese K.I."/>
        </authorList>
    </citation>
    <scope>X-RAY CRYSTALLOGRAPHY (1.9 ANGSTROMS) OF MUTANT SER-13</scope>
</reference>
<reference key="9">
    <citation type="journal article" date="1997" name="Biochemistry">
        <title>A response regulatory protein with the site of phosphorylation blocked by an arginine interaction: crystal structure of Spo0F from Bacillus subtilis.</title>
        <authorList>
            <person name="Madhusudan X."/>
            <person name="Zapf J."/>
            <person name="Hoch J.A."/>
            <person name="Whiteley J.M."/>
            <person name="Xuong N.H."/>
            <person name="Varughese K.I."/>
        </authorList>
    </citation>
    <scope>X-RAY CRYSTALLOGRAPHY (2.45 ANGSTROMS)</scope>
</reference>
<reference key="10">
    <citation type="journal article" date="2000" name="Structure">
        <title>A transient interaction between two phosphorelay proteins trapped in a crystal lattice reveals the mechanism of molecular recognition and phosphotransfer in signal transduction.</title>
        <authorList>
            <person name="Zapf J."/>
            <person name="Sen U."/>
            <person name="Madhusudan X."/>
            <person name="Hoch J.A."/>
            <person name="Varughese K.I."/>
        </authorList>
    </citation>
    <scope>X-RAY CRYSTALLOGRAPHY (3.0 ANGSTROMS)</scope>
</reference>
<protein>
    <recommendedName>
        <fullName>Sporulation initiation phosphotransferase F</fullName>
        <ecNumber>2.7.-.-</ecNumber>
    </recommendedName>
    <alternativeName>
        <fullName>Stage 0 sporulation protein F</fullName>
    </alternativeName>
</protein>
<accession>P06628</accession>
<evidence type="ECO:0000255" key="1">
    <source>
        <dbReference type="PROSITE-ProRule" id="PRU00169"/>
    </source>
</evidence>
<evidence type="ECO:0000269" key="2">
    <source>
    </source>
</evidence>
<evidence type="ECO:0000305" key="3"/>
<evidence type="ECO:0007829" key="4">
    <source>
        <dbReference type="PDB" id="1NAT"/>
    </source>
</evidence>
<evidence type="ECO:0007829" key="5">
    <source>
        <dbReference type="PDB" id="1SRR"/>
    </source>
</evidence>
<evidence type="ECO:0007829" key="6">
    <source>
        <dbReference type="PDB" id="2JVJ"/>
    </source>
</evidence>
<feature type="chain" id="PRO_0000081244" description="Sporulation initiation phosphotransferase F">
    <location>
        <begin position="1"/>
        <end position="124"/>
    </location>
</feature>
<feature type="domain" description="Response regulatory" evidence="1">
    <location>
        <begin position="5"/>
        <end position="119"/>
    </location>
</feature>
<feature type="binding site">
    <location>
        <position position="10"/>
    </location>
    <ligand>
        <name>Mg(2+)</name>
        <dbReference type="ChEBI" id="CHEBI:18420"/>
    </ligand>
</feature>
<feature type="binding site">
    <location>
        <position position="11"/>
    </location>
    <ligand>
        <name>Mg(2+)</name>
        <dbReference type="ChEBI" id="CHEBI:18420"/>
    </ligand>
</feature>
<feature type="binding site">
    <location>
        <position position="54"/>
    </location>
    <ligand>
        <name>Mg(2+)</name>
        <dbReference type="ChEBI" id="CHEBI:18420"/>
    </ligand>
</feature>
<feature type="binding site">
    <location>
        <position position="56"/>
    </location>
    <ligand>
        <name>Mg(2+)</name>
        <dbReference type="ChEBI" id="CHEBI:18420"/>
    </ligand>
</feature>
<feature type="modified residue" description="4-aspartylphosphate" evidence="1 2">
    <location>
        <position position="54"/>
    </location>
</feature>
<feature type="strand" evidence="5">
    <location>
        <begin position="5"/>
        <end position="9"/>
    </location>
</feature>
<feature type="helix" evidence="5">
    <location>
        <begin position="13"/>
        <end position="24"/>
    </location>
</feature>
<feature type="turn" evidence="5">
    <location>
        <begin position="25"/>
        <end position="27"/>
    </location>
</feature>
<feature type="strand" evidence="5">
    <location>
        <begin position="29"/>
        <end position="35"/>
    </location>
</feature>
<feature type="helix" evidence="5">
    <location>
        <begin position="36"/>
        <end position="46"/>
    </location>
</feature>
<feature type="strand" evidence="5">
    <location>
        <begin position="49"/>
        <end position="55"/>
    </location>
</feature>
<feature type="strand" evidence="4">
    <location>
        <begin position="58"/>
        <end position="60"/>
    </location>
</feature>
<feature type="helix" evidence="5">
    <location>
        <begin position="62"/>
        <end position="72"/>
    </location>
</feature>
<feature type="strand" evidence="5">
    <location>
        <begin position="77"/>
        <end position="84"/>
    </location>
</feature>
<feature type="helix" evidence="5">
    <location>
        <begin position="87"/>
        <end position="96"/>
    </location>
</feature>
<feature type="strand" evidence="5">
    <location>
        <begin position="101"/>
        <end position="105"/>
    </location>
</feature>
<feature type="helix" evidence="5">
    <location>
        <begin position="108"/>
        <end position="118"/>
    </location>
</feature>
<feature type="strand" evidence="6">
    <location>
        <begin position="122"/>
        <end position="124"/>
    </location>
</feature>
<proteinExistence type="evidence at protein level"/>
<name>SP0F_BACSU</name>
<gene>
    <name type="primary">spo0F</name>
    <name type="ordered locus">BSU37130</name>
</gene>